<proteinExistence type="evidence at protein level"/>
<name>GIL_DROME</name>
<sequence length="444" mass="49924">MPTTLMLLPCMLLLLLTAAAVAVGGTRLPLEVFEITPTTSTADKHKSLQYTVVYDAKDISGAAAATGVASSTVKPATEQLTVVSISSTAAAEKDLAESRRHARQMLQKQQQHRSIIGGKHGDRDVRILYQVGDSEEDLPVCAPNAVCSKIDLYETPWIERQCRCPESNRMPNNVIIHHHSHSSGSVDSLKYRNYYEREKMMQHKRMLLGEFQDKKFESLHMKKLMQKLGAVYEDDLDHLDQSPDYNDALPYAEVQDNEFPRGSAHMRHSGHRGSKEPATTFIGGCPSSLGVEDGHTIADKTRHYKMCQPVHKLPVCTHFRDYTWTLTTAAELNVTEQIVHCRCPRNSVTYLTKREPIGNGSPGYRYLFACSPLTRLRCQRKQPCKLFTVRKRQEFLDEVNINSLCQCPKGHRCPSHHTQSGVIAGESFLEDNIQTYSGYCMAND</sequence>
<gene>
    <name type="primary">aos</name>
    <name type="synonym">gil</name>
    <name type="synonym">sty</name>
    <name type="ORF">CG4531</name>
</gene>
<feature type="signal peptide" evidence="1">
    <location>
        <begin position="1"/>
        <end position="24"/>
    </location>
</feature>
<feature type="chain" id="PRO_0000021331" description="Protein giant-lens">
    <location>
        <begin position="25"/>
        <end position="444"/>
    </location>
</feature>
<feature type="repeat" description="Two-fingered domain 1 part 1" evidence="8">
    <location>
        <begin position="123"/>
        <end position="165"/>
    </location>
</feature>
<feature type="repeat" description="Two-fingered domain 1 part 2" evidence="8">
    <location>
        <begin position="285"/>
        <end position="307"/>
    </location>
</feature>
<feature type="repeat" description="Two-fingered domain 2" evidence="8">
    <location>
        <begin position="316"/>
        <end position="370"/>
    </location>
</feature>
<feature type="repeat" description="Two-fingered domain 3" evidence="8">
    <location>
        <begin position="378"/>
        <end position="444"/>
    </location>
</feature>
<feature type="glycosylation site" description="N-linked (GlcNAc...) asparagine" evidence="1">
    <location>
        <position position="333"/>
    </location>
</feature>
<feature type="disulfide bond" evidence="8">
    <location>
        <begin position="141"/>
        <end position="162"/>
    </location>
</feature>
<feature type="disulfide bond" evidence="8">
    <location>
        <begin position="147"/>
        <end position="285"/>
    </location>
</feature>
<feature type="disulfide bond" evidence="8">
    <location>
        <begin position="164"/>
        <end position="307"/>
    </location>
</feature>
<feature type="disulfide bond" evidence="8">
    <location>
        <begin position="316"/>
        <end position="341"/>
    </location>
</feature>
<feature type="disulfide bond" evidence="8">
    <location>
        <begin position="343"/>
        <end position="370"/>
    </location>
</feature>
<feature type="disulfide bond" evidence="8">
    <location>
        <begin position="378"/>
        <end position="405"/>
    </location>
</feature>
<feature type="disulfide bond" evidence="8">
    <location>
        <begin position="384"/>
        <end position="413"/>
    </location>
</feature>
<feature type="disulfide bond" evidence="8">
    <location>
        <begin position="407"/>
        <end position="440"/>
    </location>
</feature>
<feature type="sequence conflict" description="In Ref. 6; AAM52736." evidence="9" ref="6">
    <original>I</original>
    <variation>V</variation>
    <location>
        <position position="282"/>
    </location>
</feature>
<feature type="sequence conflict" description="In Ref. 1; CAA46279, 2; AAA28379 and 3; AAB25390." evidence="9" ref="1 2 3">
    <original>T</original>
    <variation>K</variation>
    <location>
        <position position="317"/>
    </location>
</feature>
<feature type="sequence conflict" description="In Ref. 1; CAA46279, 2; AAA28379 and 3; AAB25390." evidence="9" ref="1 2 3">
    <original>G</original>
    <variation>D</variation>
    <location>
        <position position="360"/>
    </location>
</feature>
<feature type="strand" evidence="10">
    <location>
        <begin position="126"/>
        <end position="134"/>
    </location>
</feature>
<feature type="helix" evidence="10">
    <location>
        <begin position="135"/>
        <end position="137"/>
    </location>
</feature>
<feature type="strand" evidence="10">
    <location>
        <begin position="145"/>
        <end position="151"/>
    </location>
</feature>
<feature type="strand" evidence="10">
    <location>
        <begin position="153"/>
        <end position="155"/>
    </location>
</feature>
<feature type="strand" evidence="10">
    <location>
        <begin position="157"/>
        <end position="160"/>
    </location>
</feature>
<feature type="strand" evidence="10">
    <location>
        <begin position="289"/>
        <end position="291"/>
    </location>
</feature>
<feature type="strand" evidence="10">
    <location>
        <begin position="294"/>
        <end position="299"/>
    </location>
</feature>
<feature type="strand" evidence="10">
    <location>
        <begin position="302"/>
        <end position="308"/>
    </location>
</feature>
<feature type="helix" evidence="11">
    <location>
        <begin position="310"/>
        <end position="312"/>
    </location>
</feature>
<feature type="turn" evidence="10">
    <location>
        <begin position="318"/>
        <end position="320"/>
    </location>
</feature>
<feature type="strand" evidence="10">
    <location>
        <begin position="324"/>
        <end position="329"/>
    </location>
</feature>
<feature type="turn" evidence="10">
    <location>
        <begin position="330"/>
        <end position="333"/>
    </location>
</feature>
<feature type="strand" evidence="10">
    <location>
        <begin position="334"/>
        <end position="339"/>
    </location>
</feature>
<feature type="strand" evidence="10">
    <location>
        <begin position="347"/>
        <end position="356"/>
    </location>
</feature>
<feature type="strand" evidence="10">
    <location>
        <begin position="363"/>
        <end position="372"/>
    </location>
</feature>
<feature type="strand" evidence="10">
    <location>
        <begin position="383"/>
        <end position="393"/>
    </location>
</feature>
<feature type="strand" evidence="10">
    <location>
        <begin position="396"/>
        <end position="403"/>
    </location>
</feature>
<feature type="strand" evidence="10">
    <location>
        <begin position="422"/>
        <end position="427"/>
    </location>
</feature>
<feature type="helix" evidence="11">
    <location>
        <begin position="429"/>
        <end position="431"/>
    </location>
</feature>
<feature type="strand" evidence="10">
    <location>
        <begin position="433"/>
        <end position="439"/>
    </location>
</feature>
<organism>
    <name type="scientific">Drosophila melanogaster</name>
    <name type="common">Fruit fly</name>
    <dbReference type="NCBI Taxonomy" id="7227"/>
    <lineage>
        <taxon>Eukaryota</taxon>
        <taxon>Metazoa</taxon>
        <taxon>Ecdysozoa</taxon>
        <taxon>Arthropoda</taxon>
        <taxon>Hexapoda</taxon>
        <taxon>Insecta</taxon>
        <taxon>Pterygota</taxon>
        <taxon>Neoptera</taxon>
        <taxon>Endopterygota</taxon>
        <taxon>Diptera</taxon>
        <taxon>Brachycera</taxon>
        <taxon>Muscomorpha</taxon>
        <taxon>Ephydroidea</taxon>
        <taxon>Drosophilidae</taxon>
        <taxon>Drosophila</taxon>
        <taxon>Sophophora</taxon>
    </lineage>
</organism>
<comment type="function">
    <text evidence="2 3 4 5 6 7">Regulates cell determination; development of ommatidia and optic lobe. Is a signaling molecule involved in the process of axon pathfinding in the eye. Part of the Ras pathway regulating programmed cell death in pupal eyes; activated by lozenge (lz). Antagonist for the Egfr receptor (gurken). Inhibits Egfr signaling without interacting directly with the receptor, but instead by sequestering the Egfr-activating ligand spitz (spi).</text>
</comment>
<comment type="subunit">
    <text evidence="4 8">Interacts with spi.</text>
</comment>
<comment type="interaction">
    <interactant intactId="EBI-596393">
        <id>Q00805</id>
    </interactant>
    <interactant intactId="EBI-596393">
        <id>Q00805</id>
        <label>aos</label>
    </interactant>
    <organismsDiffer>false</organismsDiffer>
    <experiments>3</experiments>
</comment>
<comment type="interaction">
    <interactant intactId="EBI-596393">
        <id>Q00805</id>
    </interactant>
    <interactant intactId="EBI-91342">
        <id>Q01083</id>
        <label>spi</label>
    </interactant>
    <organismsDiffer>false</organismsDiffer>
    <experiments>2</experiments>
</comment>
<comment type="subcellular location">
    <subcellularLocation>
        <location evidence="6">Secreted</location>
    </subcellularLocation>
</comment>
<comment type="tissue specificity">
    <text evidence="3">During embryogenesis, expression is in a segmental pattern in the ectoderm and in the nervous system. In the eye imaginal disks, expression in photoreceptor cells begins a few rows posterior to the morphogenetic furrow. Also expressed in the wing disk. In the adult, expression is seen in the retina and lamina.</text>
</comment>
<comment type="domain">
    <text>The three two-fingered repeats tightly encircle spi, providing the basis for it's sequestration. The first repeat harbors a 120 AA insert specific to drosophilidae.</text>
</comment>
<comment type="disruption phenotype">
    <text evidence="6">Flies exhibit transformation of the eye mystery cells, which are usually non-neuronal, into extra photoreceptors, and supernumerary cone cells and pigment cells are also recruited. Mutants also exhibit abnormal head involution, a change in a number of sensilla in the antennomaxillary complex and abnormal morphogenesis of the maxillary palp and wings in later stages.</text>
</comment>
<comment type="sequence caution" evidence="9">
    <conflict type="erroneous termination">
        <sequence resource="EMBL-CDS" id="AAM52736"/>
    </conflict>
    <text>Truncated C-terminus.</text>
</comment>
<keyword id="KW-0002">3D-structure</keyword>
<keyword id="KW-0217">Developmental protein</keyword>
<keyword id="KW-1015">Disulfide bond</keyword>
<keyword id="KW-0325">Glycoprotein</keyword>
<keyword id="KW-1185">Reference proteome</keyword>
<keyword id="KW-0677">Repeat</keyword>
<keyword id="KW-0964">Secreted</keyword>
<keyword id="KW-0716">Sensory transduction</keyword>
<keyword id="KW-0732">Signal</keyword>
<keyword id="KW-0844">Vision</keyword>
<dbReference type="EMBL" id="X65161">
    <property type="protein sequence ID" value="CAA46279.1"/>
    <property type="molecule type" value="mRNA"/>
</dbReference>
<dbReference type="EMBL" id="M91381">
    <property type="protein sequence ID" value="AAA28379.1"/>
    <property type="molecule type" value="mRNA"/>
</dbReference>
<dbReference type="EMBL" id="S55367">
    <property type="protein sequence ID" value="AAB25390.1"/>
    <property type="molecule type" value="mRNA"/>
</dbReference>
<dbReference type="EMBL" id="AE014296">
    <property type="protein sequence ID" value="AAF49458.2"/>
    <property type="molecule type" value="Genomic_DNA"/>
</dbReference>
<dbReference type="EMBL" id="AY122224">
    <property type="protein sequence ID" value="AAM52736.1"/>
    <property type="status" value="ALT_SEQ"/>
    <property type="molecule type" value="mRNA"/>
</dbReference>
<dbReference type="PIR" id="S22699">
    <property type="entry name" value="S22699"/>
</dbReference>
<dbReference type="RefSeq" id="NP_524107.2">
    <property type="nucleotide sequence ID" value="NM_079383.3"/>
</dbReference>
<dbReference type="PDB" id="3C9A">
    <property type="method" value="X-ray"/>
    <property type="resolution" value="1.60 A"/>
    <property type="chains" value="A/B=113-165, A/B=285-444"/>
</dbReference>
<dbReference type="PDB" id="3CGU">
    <property type="method" value="X-ray"/>
    <property type="resolution" value="2.51 A"/>
    <property type="chains" value="A/B=113-165, A/B=285-444"/>
</dbReference>
<dbReference type="PDBsum" id="3C9A"/>
<dbReference type="PDBsum" id="3CGU"/>
<dbReference type="SMR" id="Q00805"/>
<dbReference type="BioGRID" id="65137">
    <property type="interactions" value="59"/>
</dbReference>
<dbReference type="DIP" id="DIP-60630N"/>
<dbReference type="FunCoup" id="Q00805">
    <property type="interactions" value="144"/>
</dbReference>
<dbReference type="IntAct" id="Q00805">
    <property type="interactions" value="1"/>
</dbReference>
<dbReference type="STRING" id="7227.FBpp0075166"/>
<dbReference type="GlyCosmos" id="Q00805">
    <property type="glycosylation" value="1 site, No reported glycans"/>
</dbReference>
<dbReference type="GlyGen" id="Q00805">
    <property type="glycosylation" value="1 site"/>
</dbReference>
<dbReference type="PaxDb" id="7227-FBpp0075166"/>
<dbReference type="EnsemblMetazoa" id="FBtr0075408">
    <property type="protein sequence ID" value="FBpp0075166"/>
    <property type="gene ID" value="FBgn0004569"/>
</dbReference>
<dbReference type="GeneID" id="39833"/>
<dbReference type="KEGG" id="dme:Dmel_CG4531"/>
<dbReference type="AGR" id="FB:FBgn0004569"/>
<dbReference type="CTD" id="39833"/>
<dbReference type="FlyBase" id="FBgn0004569">
    <property type="gene designation" value="aos"/>
</dbReference>
<dbReference type="VEuPathDB" id="VectorBase:FBgn0004569"/>
<dbReference type="eggNOG" id="ENOG502RZNS">
    <property type="taxonomic scope" value="Eukaryota"/>
</dbReference>
<dbReference type="HOGENOM" id="CLU_050120_0_0_1"/>
<dbReference type="InParanoid" id="Q00805"/>
<dbReference type="OMA" id="TEQVVHC"/>
<dbReference type="OrthoDB" id="8177523at2759"/>
<dbReference type="PhylomeDB" id="Q00805"/>
<dbReference type="SignaLink" id="Q00805"/>
<dbReference type="BioGRID-ORCS" id="39833">
    <property type="hits" value="0 hits in 1 CRISPR screen"/>
</dbReference>
<dbReference type="EvolutionaryTrace" id="Q00805"/>
<dbReference type="GenomeRNAi" id="39833"/>
<dbReference type="PRO" id="PR:Q00805"/>
<dbReference type="Proteomes" id="UP000000803">
    <property type="component" value="Chromosome 3L"/>
</dbReference>
<dbReference type="Bgee" id="FBgn0004569">
    <property type="expression patterns" value="Expressed in peripheral glial cell (Drosophila) in imaginal disc-derived wing and 133 other cell types or tissues"/>
</dbReference>
<dbReference type="GO" id="GO:0005615">
    <property type="term" value="C:extracellular space"/>
    <property type="evidence" value="ECO:0000314"/>
    <property type="project" value="FlyBase"/>
</dbReference>
<dbReference type="GO" id="GO:0005154">
    <property type="term" value="F:epidermal growth factor receptor binding"/>
    <property type="evidence" value="ECO:0000314"/>
    <property type="project" value="FlyBase"/>
</dbReference>
<dbReference type="GO" id="GO:0042802">
    <property type="term" value="F:identical protein binding"/>
    <property type="evidence" value="ECO:0000353"/>
    <property type="project" value="IntAct"/>
</dbReference>
<dbReference type="GO" id="GO:0048019">
    <property type="term" value="F:receptor antagonist activity"/>
    <property type="evidence" value="ECO:0000314"/>
    <property type="project" value="FlyBase"/>
</dbReference>
<dbReference type="GO" id="GO:0009948">
    <property type="term" value="P:anterior/posterior axis specification"/>
    <property type="evidence" value="ECO:0000315"/>
    <property type="project" value="FlyBase"/>
</dbReference>
<dbReference type="GO" id="GO:0009950">
    <property type="term" value="P:dorsal/ventral axis specification"/>
    <property type="evidence" value="ECO:0000315"/>
    <property type="project" value="FlyBase"/>
</dbReference>
<dbReference type="GO" id="GO:0001654">
    <property type="term" value="P:eye development"/>
    <property type="evidence" value="ECO:0000315"/>
    <property type="project" value="FlyBase"/>
</dbReference>
<dbReference type="GO" id="GO:0007455">
    <property type="term" value="P:eye-antennal disc morphogenesis"/>
    <property type="evidence" value="ECO:0000315"/>
    <property type="project" value="FlyBase"/>
</dbReference>
<dbReference type="GO" id="GO:0035215">
    <property type="term" value="P:genital disc development"/>
    <property type="evidence" value="ECO:0000315"/>
    <property type="project" value="FlyBase"/>
</dbReference>
<dbReference type="GO" id="GO:0007482">
    <property type="term" value="P:haltere development"/>
    <property type="evidence" value="ECO:0000316"/>
    <property type="project" value="FlyBase"/>
</dbReference>
<dbReference type="GO" id="GO:0007476">
    <property type="term" value="P:imaginal disc-derived wing morphogenesis"/>
    <property type="evidence" value="ECO:0000315"/>
    <property type="project" value="FlyBase"/>
</dbReference>
<dbReference type="GO" id="GO:0007474">
    <property type="term" value="P:imaginal disc-derived wing vein specification"/>
    <property type="evidence" value="ECO:0000315"/>
    <property type="project" value="FlyBase"/>
</dbReference>
<dbReference type="GO" id="GO:0042059">
    <property type="term" value="P:negative regulation of epidermal growth factor receptor signaling pathway"/>
    <property type="evidence" value="ECO:0000314"/>
    <property type="project" value="FlyBase"/>
</dbReference>
<dbReference type="GO" id="GO:0070373">
    <property type="term" value="P:negative regulation of ERK1 and ERK2 cascade"/>
    <property type="evidence" value="ECO:0000315"/>
    <property type="project" value="FlyBase"/>
</dbReference>
<dbReference type="GO" id="GO:0050768">
    <property type="term" value="P:negative regulation of neurogenesis"/>
    <property type="evidence" value="ECO:0000315"/>
    <property type="project" value="FlyBase"/>
</dbReference>
<dbReference type="GO" id="GO:2000737">
    <property type="term" value="P:negative regulation of stem cell differentiation"/>
    <property type="evidence" value="ECO:0000316"/>
    <property type="project" value="FlyBase"/>
</dbReference>
<dbReference type="GO" id="GO:0060233">
    <property type="term" value="P:oenocyte delamination"/>
    <property type="evidence" value="ECO:0000315"/>
    <property type="project" value="FlyBase"/>
</dbReference>
<dbReference type="GO" id="GO:0016318">
    <property type="term" value="P:ommatidial rotation"/>
    <property type="evidence" value="ECO:0000315"/>
    <property type="project" value="FlyBase"/>
</dbReference>
<dbReference type="GO" id="GO:0043065">
    <property type="term" value="P:positive regulation of apoptotic process"/>
    <property type="evidence" value="ECO:0000315"/>
    <property type="project" value="FlyBase"/>
</dbReference>
<dbReference type="GO" id="GO:0007601">
    <property type="term" value="P:visual perception"/>
    <property type="evidence" value="ECO:0007669"/>
    <property type="project" value="UniProtKB-KW"/>
</dbReference>
<dbReference type="GO" id="GO:0007472">
    <property type="term" value="P:wing disc morphogenesis"/>
    <property type="evidence" value="ECO:0000315"/>
    <property type="project" value="FlyBase"/>
</dbReference>
<dbReference type="Gene3D" id="2.20.20.150">
    <property type="match status" value="1"/>
</dbReference>
<dbReference type="Gene3D" id="2.20.20.160">
    <property type="match status" value="3"/>
</dbReference>
<dbReference type="InterPro" id="IPR021633">
    <property type="entry name" value="Argos"/>
</dbReference>
<dbReference type="Pfam" id="PF11581">
    <property type="entry name" value="Argos"/>
    <property type="match status" value="1"/>
</dbReference>
<reference key="1">
    <citation type="journal article" date="1992" name="EMBO J.">
        <title>Giant lens, a gene involved in cell determination and axon guidance in the visual system of Drosophila melanogaster.</title>
        <authorList>
            <person name="Kretzschmar D."/>
            <person name="Brunner A."/>
            <person name="Wiersdorff V."/>
            <person name="Pflugfelder G.O."/>
            <person name="Heisenberg M."/>
            <person name="Schneuwly S."/>
        </authorList>
    </citation>
    <scope>NUCLEOTIDE SEQUENCE [MRNA]</scope>
    <scope>FUNCTION</scope>
    <source>
        <strain>Oregon-R</strain>
    </source>
</reference>
<reference key="2">
    <citation type="journal article" date="1992" name="Cell">
        <title>The argos gene encodes a diffusible factor that regulates cell fate decisions in the Drosophila eye.</title>
        <authorList>
            <person name="Freeman M."/>
            <person name="Klambt C."/>
            <person name="Goodman C.S."/>
            <person name="Rubin G.M."/>
        </authorList>
    </citation>
    <scope>NUCLEOTIDE SEQUENCE [MRNA]</scope>
    <scope>FUNCTION</scope>
    <scope>SUBCELLULAR LOCATION</scope>
    <scope>DISRUPTION PHENOTYPE</scope>
    <source>
        <tissue>Embryo</tissue>
    </source>
</reference>
<reference key="3">
    <citation type="journal article" date="1992" name="Differentiation">
        <title>Regulation of Drosophila neural development by a putative secreted protein.</title>
        <authorList>
            <person name="Okano H."/>
            <person name="Hayashi S."/>
            <person name="Tanimura T."/>
            <person name="Sawamoto K."/>
            <person name="Yoshikawa S."/>
            <person name="Watanabe J."/>
            <person name="Iwasaki M."/>
            <person name="Hirose S."/>
            <person name="Mikoshiba K."/>
            <person name="Montell C."/>
        </authorList>
    </citation>
    <scope>NUCLEOTIDE SEQUENCE [MRNA]</scope>
    <scope>FUNCTION</scope>
    <scope>TISSUE SPECIFICITY</scope>
</reference>
<reference key="4">
    <citation type="journal article" date="2000" name="Science">
        <title>The genome sequence of Drosophila melanogaster.</title>
        <authorList>
            <person name="Adams M.D."/>
            <person name="Celniker S.E."/>
            <person name="Holt R.A."/>
            <person name="Evans C.A."/>
            <person name="Gocayne J.D."/>
            <person name="Amanatides P.G."/>
            <person name="Scherer S.E."/>
            <person name="Li P.W."/>
            <person name="Hoskins R.A."/>
            <person name="Galle R.F."/>
            <person name="George R.A."/>
            <person name="Lewis S.E."/>
            <person name="Richards S."/>
            <person name="Ashburner M."/>
            <person name="Henderson S.N."/>
            <person name="Sutton G.G."/>
            <person name="Wortman J.R."/>
            <person name="Yandell M.D."/>
            <person name="Zhang Q."/>
            <person name="Chen L.X."/>
            <person name="Brandon R.C."/>
            <person name="Rogers Y.-H.C."/>
            <person name="Blazej R.G."/>
            <person name="Champe M."/>
            <person name="Pfeiffer B.D."/>
            <person name="Wan K.H."/>
            <person name="Doyle C."/>
            <person name="Baxter E.G."/>
            <person name="Helt G."/>
            <person name="Nelson C.R."/>
            <person name="Miklos G.L.G."/>
            <person name="Abril J.F."/>
            <person name="Agbayani A."/>
            <person name="An H.-J."/>
            <person name="Andrews-Pfannkoch C."/>
            <person name="Baldwin D."/>
            <person name="Ballew R.M."/>
            <person name="Basu A."/>
            <person name="Baxendale J."/>
            <person name="Bayraktaroglu L."/>
            <person name="Beasley E.M."/>
            <person name="Beeson K.Y."/>
            <person name="Benos P.V."/>
            <person name="Berman B.P."/>
            <person name="Bhandari D."/>
            <person name="Bolshakov S."/>
            <person name="Borkova D."/>
            <person name="Botchan M.R."/>
            <person name="Bouck J."/>
            <person name="Brokstein P."/>
            <person name="Brottier P."/>
            <person name="Burtis K.C."/>
            <person name="Busam D.A."/>
            <person name="Butler H."/>
            <person name="Cadieu E."/>
            <person name="Center A."/>
            <person name="Chandra I."/>
            <person name="Cherry J.M."/>
            <person name="Cawley S."/>
            <person name="Dahlke C."/>
            <person name="Davenport L.B."/>
            <person name="Davies P."/>
            <person name="de Pablos B."/>
            <person name="Delcher A."/>
            <person name="Deng Z."/>
            <person name="Mays A.D."/>
            <person name="Dew I."/>
            <person name="Dietz S.M."/>
            <person name="Dodson K."/>
            <person name="Doup L.E."/>
            <person name="Downes M."/>
            <person name="Dugan-Rocha S."/>
            <person name="Dunkov B.C."/>
            <person name="Dunn P."/>
            <person name="Durbin K.J."/>
            <person name="Evangelista C.C."/>
            <person name="Ferraz C."/>
            <person name="Ferriera S."/>
            <person name="Fleischmann W."/>
            <person name="Fosler C."/>
            <person name="Gabrielian A.E."/>
            <person name="Garg N.S."/>
            <person name="Gelbart W.M."/>
            <person name="Glasser K."/>
            <person name="Glodek A."/>
            <person name="Gong F."/>
            <person name="Gorrell J.H."/>
            <person name="Gu Z."/>
            <person name="Guan P."/>
            <person name="Harris M."/>
            <person name="Harris N.L."/>
            <person name="Harvey D.A."/>
            <person name="Heiman T.J."/>
            <person name="Hernandez J.R."/>
            <person name="Houck J."/>
            <person name="Hostin D."/>
            <person name="Houston K.A."/>
            <person name="Howland T.J."/>
            <person name="Wei M.-H."/>
            <person name="Ibegwam C."/>
            <person name="Jalali M."/>
            <person name="Kalush F."/>
            <person name="Karpen G.H."/>
            <person name="Ke Z."/>
            <person name="Kennison J.A."/>
            <person name="Ketchum K.A."/>
            <person name="Kimmel B.E."/>
            <person name="Kodira C.D."/>
            <person name="Kraft C.L."/>
            <person name="Kravitz S."/>
            <person name="Kulp D."/>
            <person name="Lai Z."/>
            <person name="Lasko P."/>
            <person name="Lei Y."/>
            <person name="Levitsky A.A."/>
            <person name="Li J.H."/>
            <person name="Li Z."/>
            <person name="Liang Y."/>
            <person name="Lin X."/>
            <person name="Liu X."/>
            <person name="Mattei B."/>
            <person name="McIntosh T.C."/>
            <person name="McLeod M.P."/>
            <person name="McPherson D."/>
            <person name="Merkulov G."/>
            <person name="Milshina N.V."/>
            <person name="Mobarry C."/>
            <person name="Morris J."/>
            <person name="Moshrefi A."/>
            <person name="Mount S.M."/>
            <person name="Moy M."/>
            <person name="Murphy B."/>
            <person name="Murphy L."/>
            <person name="Muzny D.M."/>
            <person name="Nelson D.L."/>
            <person name="Nelson D.R."/>
            <person name="Nelson K.A."/>
            <person name="Nixon K."/>
            <person name="Nusskern D.R."/>
            <person name="Pacleb J.M."/>
            <person name="Palazzolo M."/>
            <person name="Pittman G.S."/>
            <person name="Pan S."/>
            <person name="Pollard J."/>
            <person name="Puri V."/>
            <person name="Reese M.G."/>
            <person name="Reinert K."/>
            <person name="Remington K."/>
            <person name="Saunders R.D.C."/>
            <person name="Scheeler F."/>
            <person name="Shen H."/>
            <person name="Shue B.C."/>
            <person name="Siden-Kiamos I."/>
            <person name="Simpson M."/>
            <person name="Skupski M.P."/>
            <person name="Smith T.J."/>
            <person name="Spier E."/>
            <person name="Spradling A.C."/>
            <person name="Stapleton M."/>
            <person name="Strong R."/>
            <person name="Sun E."/>
            <person name="Svirskas R."/>
            <person name="Tector C."/>
            <person name="Turner R."/>
            <person name="Venter E."/>
            <person name="Wang A.H."/>
            <person name="Wang X."/>
            <person name="Wang Z.-Y."/>
            <person name="Wassarman D.A."/>
            <person name="Weinstock G.M."/>
            <person name="Weissenbach J."/>
            <person name="Williams S.M."/>
            <person name="Woodage T."/>
            <person name="Worley K.C."/>
            <person name="Wu D."/>
            <person name="Yang S."/>
            <person name="Yao Q.A."/>
            <person name="Ye J."/>
            <person name="Yeh R.-F."/>
            <person name="Zaveri J.S."/>
            <person name="Zhan M."/>
            <person name="Zhang G."/>
            <person name="Zhao Q."/>
            <person name="Zheng L."/>
            <person name="Zheng X.H."/>
            <person name="Zhong F.N."/>
            <person name="Zhong W."/>
            <person name="Zhou X."/>
            <person name="Zhu S.C."/>
            <person name="Zhu X."/>
            <person name="Smith H.O."/>
            <person name="Gibbs R.A."/>
            <person name="Myers E.W."/>
            <person name="Rubin G.M."/>
            <person name="Venter J.C."/>
        </authorList>
    </citation>
    <scope>NUCLEOTIDE SEQUENCE [LARGE SCALE GENOMIC DNA]</scope>
    <source>
        <strain>Berkeley</strain>
    </source>
</reference>
<reference key="5">
    <citation type="journal article" date="2002" name="Genome Biol.">
        <title>Annotation of the Drosophila melanogaster euchromatic genome: a systematic review.</title>
        <authorList>
            <person name="Misra S."/>
            <person name="Crosby M.A."/>
            <person name="Mungall C.J."/>
            <person name="Matthews B.B."/>
            <person name="Campbell K.S."/>
            <person name="Hradecky P."/>
            <person name="Huang Y."/>
            <person name="Kaminker J.S."/>
            <person name="Millburn G.H."/>
            <person name="Prochnik S.E."/>
            <person name="Smith C.D."/>
            <person name="Tupy J.L."/>
            <person name="Whitfield E.J."/>
            <person name="Bayraktaroglu L."/>
            <person name="Berman B.P."/>
            <person name="Bettencourt B.R."/>
            <person name="Celniker S.E."/>
            <person name="de Grey A.D.N.J."/>
            <person name="Drysdale R.A."/>
            <person name="Harris N.L."/>
            <person name="Richter J."/>
            <person name="Russo S."/>
            <person name="Schroeder A.J."/>
            <person name="Shu S.Q."/>
            <person name="Stapleton M."/>
            <person name="Yamada C."/>
            <person name="Ashburner M."/>
            <person name="Gelbart W.M."/>
            <person name="Rubin G.M."/>
            <person name="Lewis S.E."/>
        </authorList>
    </citation>
    <scope>GENOME REANNOTATION</scope>
    <source>
        <strain>Berkeley</strain>
    </source>
</reference>
<reference key="6">
    <citation type="journal article" date="2002" name="Genome Biol.">
        <title>A Drosophila full-length cDNA resource.</title>
        <authorList>
            <person name="Stapleton M."/>
            <person name="Carlson J.W."/>
            <person name="Brokstein P."/>
            <person name="Yu C."/>
            <person name="Champe M."/>
            <person name="George R.A."/>
            <person name="Guarin H."/>
            <person name="Kronmiller B."/>
            <person name="Pacleb J.M."/>
            <person name="Park S."/>
            <person name="Wan K.H."/>
            <person name="Rubin G.M."/>
            <person name="Celniker S.E."/>
        </authorList>
    </citation>
    <scope>NUCLEOTIDE SEQUENCE [LARGE SCALE MRNA]</scope>
    <source>
        <strain>Berkeley</strain>
        <tissue>Embryo</tissue>
    </source>
</reference>
<reference key="7">
    <citation type="journal article" date="1998" name="Cell Death Differ.">
        <title>Argos induces programmed cell death in the developing Drosophila eye by inhibition of the Ras pathway.</title>
        <authorList>
            <person name="Sawamoto K."/>
            <person name="Taguchi A."/>
            <person name="Hirota Y."/>
            <person name="Yamada C."/>
            <person name="Jin M.-H."/>
            <person name="Okano H."/>
        </authorList>
    </citation>
    <scope>FUNCTION</scope>
</reference>
<reference key="8">
    <citation type="journal article" date="2004" name="Nature">
        <title>Argos inhibits epidermal growth factor receptor signalling by ligand sequestration.</title>
        <authorList>
            <person name="Klein D.E."/>
            <person name="Nappi V.M."/>
            <person name="Reeves G.T."/>
            <person name="Shvartsman S.Y."/>
            <person name="Lemmon M.A."/>
        </authorList>
    </citation>
    <scope>FUNCTION</scope>
    <scope>INTERACTION WITH SPI</scope>
</reference>
<reference key="9">
    <citation type="journal article" date="2005" name="Genes Dev.">
        <title>Lozenge directly activates argos and klumpfuss to regulate programmed cell death.</title>
        <authorList>
            <person name="Wildonger J."/>
            <person name="Sosinsky A."/>
            <person name="Honig B."/>
            <person name="Mann R.S."/>
        </authorList>
    </citation>
    <scope>FUNCTION</scope>
</reference>
<reference key="10">
    <citation type="journal article" date="2008" name="Nature">
        <title>Structural basis for EGFR ligand sequestration by Argos.</title>
        <authorList>
            <person name="Klein D.E."/>
            <person name="Stayrook S.E."/>
            <person name="Shi F."/>
            <person name="Narayan K."/>
            <person name="Lemmon M.A."/>
        </authorList>
    </citation>
    <scope>X-RAY CRYSTALLOGRAPHY (1.6 ANGSTROMS) OF 113-165 AND 285-444 ALONE AND IN COMPLEX WITH SPITZ</scope>
    <scope>REPEATS</scope>
    <scope>DISULFIDE BONDS</scope>
</reference>
<evidence type="ECO:0000255" key="1"/>
<evidence type="ECO:0000269" key="2">
    <source>
    </source>
</evidence>
<evidence type="ECO:0000269" key="3">
    <source>
    </source>
</evidence>
<evidence type="ECO:0000269" key="4">
    <source>
    </source>
</evidence>
<evidence type="ECO:0000269" key="5">
    <source>
    </source>
</evidence>
<evidence type="ECO:0000269" key="6">
    <source>
    </source>
</evidence>
<evidence type="ECO:0000269" key="7">
    <source>
    </source>
</evidence>
<evidence type="ECO:0000269" key="8">
    <source>
    </source>
</evidence>
<evidence type="ECO:0000305" key="9"/>
<evidence type="ECO:0007829" key="10">
    <source>
        <dbReference type="PDB" id="3C9A"/>
    </source>
</evidence>
<evidence type="ECO:0007829" key="11">
    <source>
        <dbReference type="PDB" id="3CGU"/>
    </source>
</evidence>
<accession>Q00805</accession>
<accession>Q8MQZ2</accession>
<accession>Q9VV64</accession>
<protein>
    <recommendedName>
        <fullName>Protein giant-lens</fullName>
    </recommendedName>
    <alternativeName>
        <fullName>Protein argos</fullName>
    </alternativeName>
    <alternativeName>
        <fullName>Protein strawberry</fullName>
    </alternativeName>
</protein>